<feature type="chain" id="PRO_0000232209" description="ATP-dependent RNA helicase HAS1">
    <location>
        <begin position="1"/>
        <end position="544"/>
    </location>
</feature>
<feature type="domain" description="Helicase ATP-binding" evidence="2">
    <location>
        <begin position="97"/>
        <end position="273"/>
    </location>
</feature>
<feature type="domain" description="Helicase C-terminal" evidence="3">
    <location>
        <begin position="287"/>
        <end position="456"/>
    </location>
</feature>
<feature type="region of interest" description="Disordered" evidence="4">
    <location>
        <begin position="1"/>
        <end position="59"/>
    </location>
</feature>
<feature type="region of interest" description="Disordered" evidence="4">
    <location>
        <begin position="513"/>
        <end position="544"/>
    </location>
</feature>
<feature type="short sequence motif" description="Q motif">
    <location>
        <begin position="66"/>
        <end position="94"/>
    </location>
</feature>
<feature type="short sequence motif" description="DEAD box">
    <location>
        <begin position="220"/>
        <end position="223"/>
    </location>
</feature>
<feature type="short sequence motif" description="Bipartite nuclear localization signal" evidence="1">
    <location>
        <begin position="299"/>
        <end position="315"/>
    </location>
</feature>
<feature type="compositionally biased region" description="Low complexity" evidence="4">
    <location>
        <begin position="1"/>
        <end position="10"/>
    </location>
</feature>
<feature type="compositionally biased region" description="Basic and acidic residues" evidence="4">
    <location>
        <begin position="18"/>
        <end position="29"/>
    </location>
</feature>
<feature type="compositionally biased region" description="Polar residues" evidence="4">
    <location>
        <begin position="31"/>
        <end position="50"/>
    </location>
</feature>
<feature type="binding site" evidence="2">
    <location>
        <begin position="110"/>
        <end position="117"/>
    </location>
    <ligand>
        <name>ATP</name>
        <dbReference type="ChEBI" id="CHEBI:30616"/>
    </ligand>
</feature>
<comment type="function">
    <text>ATP-dependent RNA helicase involved in 40S ribosomal subunit biogenesis. Required for the processing and cleavage of 35S pre-rRNA at sites A0, A1, and A2, leading to mature 18S rRNA.</text>
</comment>
<comment type="catalytic activity">
    <reaction>
        <text>ATP + H2O = ADP + phosphate + H(+)</text>
        <dbReference type="Rhea" id="RHEA:13065"/>
        <dbReference type="ChEBI" id="CHEBI:15377"/>
        <dbReference type="ChEBI" id="CHEBI:15378"/>
        <dbReference type="ChEBI" id="CHEBI:30616"/>
        <dbReference type="ChEBI" id="CHEBI:43474"/>
        <dbReference type="ChEBI" id="CHEBI:456216"/>
        <dbReference type="EC" id="3.6.4.13"/>
    </reaction>
</comment>
<comment type="subunit">
    <text evidence="1">Associates in the nucleolus with the 60S and pre-60S ribosomal subunits.</text>
</comment>
<comment type="subcellular location">
    <subcellularLocation>
        <location evidence="1">Nucleus</location>
        <location evidence="1">Nucleolus</location>
    </subcellularLocation>
</comment>
<comment type="domain">
    <text>The Q motif is unique to and characteristic of the DEAD box family of RNA helicases and controls ATP binding and hydrolysis.</text>
</comment>
<comment type="similarity">
    <text evidence="5">Belongs to the DEAD box helicase family. DDX18/HAS1 subfamily.</text>
</comment>
<keyword id="KW-0067">ATP-binding</keyword>
<keyword id="KW-0347">Helicase</keyword>
<keyword id="KW-0378">Hydrolase</keyword>
<keyword id="KW-0547">Nucleotide-binding</keyword>
<keyword id="KW-0539">Nucleus</keyword>
<keyword id="KW-1185">Reference proteome</keyword>
<keyword id="KW-0690">Ribosome biogenesis</keyword>
<keyword id="KW-0694">RNA-binding</keyword>
<keyword id="KW-0698">rRNA processing</keyword>
<name>HAS1_CRYNJ</name>
<accession>P0CQ84</accession>
<accession>Q55X97</accession>
<accession>Q5KMN6</accession>
<proteinExistence type="inferred from homology"/>
<organism>
    <name type="scientific">Cryptococcus neoformans var. neoformans serotype D (strain JEC21 / ATCC MYA-565)</name>
    <name type="common">Filobasidiella neoformans</name>
    <dbReference type="NCBI Taxonomy" id="214684"/>
    <lineage>
        <taxon>Eukaryota</taxon>
        <taxon>Fungi</taxon>
        <taxon>Dikarya</taxon>
        <taxon>Basidiomycota</taxon>
        <taxon>Agaricomycotina</taxon>
        <taxon>Tremellomycetes</taxon>
        <taxon>Tremellales</taxon>
        <taxon>Cryptococcaceae</taxon>
        <taxon>Cryptococcus</taxon>
        <taxon>Cryptococcus neoformans species complex</taxon>
    </lineage>
</organism>
<reference key="1">
    <citation type="journal article" date="2005" name="Science">
        <title>The genome of the basidiomycetous yeast and human pathogen Cryptococcus neoformans.</title>
        <authorList>
            <person name="Loftus B.J."/>
            <person name="Fung E."/>
            <person name="Roncaglia P."/>
            <person name="Rowley D."/>
            <person name="Amedeo P."/>
            <person name="Bruno D."/>
            <person name="Vamathevan J."/>
            <person name="Miranda M."/>
            <person name="Anderson I.J."/>
            <person name="Fraser J.A."/>
            <person name="Allen J.E."/>
            <person name="Bosdet I.E."/>
            <person name="Brent M.R."/>
            <person name="Chiu R."/>
            <person name="Doering T.L."/>
            <person name="Donlin M.J."/>
            <person name="D'Souza C.A."/>
            <person name="Fox D.S."/>
            <person name="Grinberg V."/>
            <person name="Fu J."/>
            <person name="Fukushima M."/>
            <person name="Haas B.J."/>
            <person name="Huang J.C."/>
            <person name="Janbon G."/>
            <person name="Jones S.J.M."/>
            <person name="Koo H.L."/>
            <person name="Krzywinski M.I."/>
            <person name="Kwon-Chung K.J."/>
            <person name="Lengeler K.B."/>
            <person name="Maiti R."/>
            <person name="Marra M.A."/>
            <person name="Marra R.E."/>
            <person name="Mathewson C.A."/>
            <person name="Mitchell T.G."/>
            <person name="Pertea M."/>
            <person name="Riggs F.R."/>
            <person name="Salzberg S.L."/>
            <person name="Schein J.E."/>
            <person name="Shvartsbeyn A."/>
            <person name="Shin H."/>
            <person name="Shumway M."/>
            <person name="Specht C.A."/>
            <person name="Suh B.B."/>
            <person name="Tenney A."/>
            <person name="Utterback T.R."/>
            <person name="Wickes B.L."/>
            <person name="Wortman J.R."/>
            <person name="Wye N.H."/>
            <person name="Kronstad J.W."/>
            <person name="Lodge J.K."/>
            <person name="Heitman J."/>
            <person name="Davis R.W."/>
            <person name="Fraser C.M."/>
            <person name="Hyman R.W."/>
        </authorList>
    </citation>
    <scope>NUCLEOTIDE SEQUENCE [LARGE SCALE GENOMIC DNA]</scope>
    <source>
        <strain>JEC21 / ATCC MYA-565</strain>
    </source>
</reference>
<evidence type="ECO:0000250" key="1"/>
<evidence type="ECO:0000255" key="2">
    <source>
        <dbReference type="PROSITE-ProRule" id="PRU00541"/>
    </source>
</evidence>
<evidence type="ECO:0000255" key="3">
    <source>
        <dbReference type="PROSITE-ProRule" id="PRU00542"/>
    </source>
</evidence>
<evidence type="ECO:0000256" key="4">
    <source>
        <dbReference type="SAM" id="MobiDB-lite"/>
    </source>
</evidence>
<evidence type="ECO:0000305" key="5"/>
<protein>
    <recommendedName>
        <fullName>ATP-dependent RNA helicase HAS1</fullName>
        <ecNumber>3.6.4.13</ecNumber>
    </recommendedName>
</protein>
<dbReference type="EC" id="3.6.4.13"/>
<dbReference type="EMBL" id="AE017342">
    <property type="protein sequence ID" value="AAW41805.2"/>
    <property type="molecule type" value="Genomic_DNA"/>
</dbReference>
<dbReference type="RefSeq" id="XP_569112.1">
    <property type="nucleotide sequence ID" value="XM_569112.1"/>
</dbReference>
<dbReference type="SMR" id="P0CQ84"/>
<dbReference type="FunCoup" id="P0CQ84">
    <property type="interactions" value="605"/>
</dbReference>
<dbReference type="STRING" id="214684.P0CQ84"/>
<dbReference type="PaxDb" id="214684-P0CQ84"/>
<dbReference type="EnsemblFungi" id="AAW41805">
    <property type="protein sequence ID" value="AAW41805"/>
    <property type="gene ID" value="CNB01060"/>
</dbReference>
<dbReference type="GeneID" id="3255816"/>
<dbReference type="KEGG" id="cne:CNB01060"/>
<dbReference type="eggNOG" id="KOG0342">
    <property type="taxonomic scope" value="Eukaryota"/>
</dbReference>
<dbReference type="HOGENOM" id="CLU_003041_26_5_1"/>
<dbReference type="InParanoid" id="P0CQ84"/>
<dbReference type="OrthoDB" id="10259640at2759"/>
<dbReference type="Proteomes" id="UP000002149">
    <property type="component" value="Chromosome 2"/>
</dbReference>
<dbReference type="GO" id="GO:0005730">
    <property type="term" value="C:nucleolus"/>
    <property type="evidence" value="ECO:0000318"/>
    <property type="project" value="GO_Central"/>
</dbReference>
<dbReference type="GO" id="GO:0005524">
    <property type="term" value="F:ATP binding"/>
    <property type="evidence" value="ECO:0007669"/>
    <property type="project" value="UniProtKB-KW"/>
</dbReference>
<dbReference type="GO" id="GO:0016887">
    <property type="term" value="F:ATP hydrolysis activity"/>
    <property type="evidence" value="ECO:0007669"/>
    <property type="project" value="RHEA"/>
</dbReference>
<dbReference type="GO" id="GO:0003723">
    <property type="term" value="F:RNA binding"/>
    <property type="evidence" value="ECO:0007669"/>
    <property type="project" value="UniProtKB-KW"/>
</dbReference>
<dbReference type="GO" id="GO:0003724">
    <property type="term" value="F:RNA helicase activity"/>
    <property type="evidence" value="ECO:0007669"/>
    <property type="project" value="UniProtKB-EC"/>
</dbReference>
<dbReference type="GO" id="GO:0000463">
    <property type="term" value="P:maturation of LSU-rRNA from tricistronic rRNA transcript (SSU-rRNA, 5.8S rRNA, LSU-rRNA)"/>
    <property type="evidence" value="ECO:0000318"/>
    <property type="project" value="GO_Central"/>
</dbReference>
<dbReference type="CDD" id="cd17942">
    <property type="entry name" value="DEADc_DDX18"/>
    <property type="match status" value="1"/>
</dbReference>
<dbReference type="CDD" id="cd18787">
    <property type="entry name" value="SF2_C_DEAD"/>
    <property type="match status" value="1"/>
</dbReference>
<dbReference type="FunFam" id="3.40.50.300:FF:000379">
    <property type="entry name" value="RNA helicase"/>
    <property type="match status" value="1"/>
</dbReference>
<dbReference type="FunFam" id="3.40.50.300:FF:000460">
    <property type="entry name" value="RNA helicase"/>
    <property type="match status" value="1"/>
</dbReference>
<dbReference type="Gene3D" id="3.40.50.300">
    <property type="entry name" value="P-loop containing nucleotide triphosphate hydrolases"/>
    <property type="match status" value="2"/>
</dbReference>
<dbReference type="InterPro" id="IPR044773">
    <property type="entry name" value="DDX18/Has1_DEADc"/>
</dbReference>
<dbReference type="InterPro" id="IPR011545">
    <property type="entry name" value="DEAD/DEAH_box_helicase_dom"/>
</dbReference>
<dbReference type="InterPro" id="IPR014001">
    <property type="entry name" value="Helicase_ATP-bd"/>
</dbReference>
<dbReference type="InterPro" id="IPR001650">
    <property type="entry name" value="Helicase_C-like"/>
</dbReference>
<dbReference type="InterPro" id="IPR027417">
    <property type="entry name" value="P-loop_NTPase"/>
</dbReference>
<dbReference type="InterPro" id="IPR000629">
    <property type="entry name" value="RNA-helicase_DEAD-box_CS"/>
</dbReference>
<dbReference type="InterPro" id="IPR014014">
    <property type="entry name" value="RNA_helicase_DEAD_Q_motif"/>
</dbReference>
<dbReference type="InterPro" id="IPR025313">
    <property type="entry name" value="SPB4-like_CTE"/>
</dbReference>
<dbReference type="PANTHER" id="PTHR24031">
    <property type="entry name" value="RNA HELICASE"/>
    <property type="match status" value="1"/>
</dbReference>
<dbReference type="Pfam" id="PF13959">
    <property type="entry name" value="CTE_SPB4"/>
    <property type="match status" value="1"/>
</dbReference>
<dbReference type="Pfam" id="PF00270">
    <property type="entry name" value="DEAD"/>
    <property type="match status" value="1"/>
</dbReference>
<dbReference type="Pfam" id="PF00271">
    <property type="entry name" value="Helicase_C"/>
    <property type="match status" value="1"/>
</dbReference>
<dbReference type="SMART" id="SM00487">
    <property type="entry name" value="DEXDc"/>
    <property type="match status" value="1"/>
</dbReference>
<dbReference type="SMART" id="SM01178">
    <property type="entry name" value="DUF4217"/>
    <property type="match status" value="1"/>
</dbReference>
<dbReference type="SMART" id="SM00490">
    <property type="entry name" value="HELICc"/>
    <property type="match status" value="1"/>
</dbReference>
<dbReference type="SUPFAM" id="SSF52540">
    <property type="entry name" value="P-loop containing nucleoside triphosphate hydrolases"/>
    <property type="match status" value="1"/>
</dbReference>
<dbReference type="PROSITE" id="PS00039">
    <property type="entry name" value="DEAD_ATP_HELICASE"/>
    <property type="match status" value="1"/>
</dbReference>
<dbReference type="PROSITE" id="PS51192">
    <property type="entry name" value="HELICASE_ATP_BIND_1"/>
    <property type="match status" value="1"/>
</dbReference>
<dbReference type="PROSITE" id="PS51194">
    <property type="entry name" value="HELICASE_CTER"/>
    <property type="match status" value="1"/>
</dbReference>
<dbReference type="PROSITE" id="PS51195">
    <property type="entry name" value="Q_MOTIF"/>
    <property type="match status" value="1"/>
</dbReference>
<sequence>MSSTKPPTTTNKRKRTSNAHDEAPAKRVPEASSSKVTLDDSQPAPATSSDAVLGARSAPGTDYERVPFSTLNLSPPTTAAIERMGFETMTEVQARTIPPLLAGKDVLGAARTGSGKTMAFLIPSVELLSTLRFKPVNGTGVIIISPTRELALQIFGVAKELMQGHSQTFGVLMGGANRKAEADKLVKGVNLIVATPGRLLDHLQNTKGFVFKNLKALVIDEADRILEIGFEEEMKQIIKLLPSENRQSMLFSATQTTKVTDLARISLRPGPLYINVDETKEASTADMLEQGYVVCESDQRFMLLFTFLKKNLKKKVIVFFSSCNSVKYHAELLNYIDVPVLDLHGKQKQQKRTNTFFEFINAPAGILLCTDVAARGLDIPKVDWIIQFDPPDDPRDYIHRVGRTARAGKSGKSLLFLLPSELGFLRFLKVAKVPLNEYQFPQKKVADVQKQLESLISKNHYLNTSARDGYRSYLQAYASYSLKKIFDVNKLDLAKVGKAFGFAVPPKVNISVGSVKAKKSRDEDESSDDDGQPKKAYYRNRGRK</sequence>
<gene>
    <name type="primary">HAS1</name>
    <name type="ordered locus">CNB01060</name>
</gene>